<name>SPLE_STAAT</name>
<feature type="signal peptide" evidence="2">
    <location>
        <begin position="1"/>
        <end position="36"/>
    </location>
</feature>
<feature type="chain" id="PRO_0000359577" description="Serine protease SplE">
    <location>
        <begin position="37"/>
        <end position="238"/>
    </location>
</feature>
<feature type="active site" description="Charge relay system" evidence="1">
    <location>
        <position position="75"/>
    </location>
</feature>
<feature type="active site" description="Charge relay system" evidence="1">
    <location>
        <position position="113"/>
    </location>
</feature>
<feature type="active site" description="Charge relay system" evidence="1">
    <location>
        <position position="191"/>
    </location>
</feature>
<dbReference type="EC" id="3.4.21.-"/>
<dbReference type="EMBL" id="CP000730">
    <property type="protein sequence ID" value="ABX29805.1"/>
    <property type="molecule type" value="Genomic_DNA"/>
</dbReference>
<dbReference type="RefSeq" id="WP_001038759.1">
    <property type="nucleotide sequence ID" value="NC_010079.1"/>
</dbReference>
<dbReference type="SMR" id="A8Z4N5"/>
<dbReference type="MEROPS" id="S01.312"/>
<dbReference type="KEGG" id="sax:USA300HOU_1802"/>
<dbReference type="HOGENOM" id="CLU_073589_2_0_9"/>
<dbReference type="GO" id="GO:0005576">
    <property type="term" value="C:extracellular region"/>
    <property type="evidence" value="ECO:0007669"/>
    <property type="project" value="UniProtKB-SubCell"/>
</dbReference>
<dbReference type="GO" id="GO:0004252">
    <property type="term" value="F:serine-type endopeptidase activity"/>
    <property type="evidence" value="ECO:0007669"/>
    <property type="project" value="InterPro"/>
</dbReference>
<dbReference type="GO" id="GO:0006508">
    <property type="term" value="P:proteolysis"/>
    <property type="evidence" value="ECO:0007669"/>
    <property type="project" value="UniProtKB-KW"/>
</dbReference>
<dbReference type="Gene3D" id="2.40.10.10">
    <property type="entry name" value="Trypsin-like serine proteases"/>
    <property type="match status" value="2"/>
</dbReference>
<dbReference type="InterPro" id="IPR009003">
    <property type="entry name" value="Peptidase_S1_PA"/>
</dbReference>
<dbReference type="InterPro" id="IPR043504">
    <property type="entry name" value="Peptidase_S1_PA_chymotrypsin"/>
</dbReference>
<dbReference type="InterPro" id="IPR008256">
    <property type="entry name" value="Peptidase_S1B"/>
</dbReference>
<dbReference type="InterPro" id="IPR008353">
    <property type="entry name" value="Peptidase_S1B_tx"/>
</dbReference>
<dbReference type="InterPro" id="IPR001254">
    <property type="entry name" value="Trypsin_dom"/>
</dbReference>
<dbReference type="InterPro" id="IPR028301">
    <property type="entry name" value="V8_his_AS"/>
</dbReference>
<dbReference type="PANTHER" id="PTHR43019:SF23">
    <property type="entry name" value="PROTEASE DO-LIKE 5, CHLOROPLASTIC"/>
    <property type="match status" value="1"/>
</dbReference>
<dbReference type="PANTHER" id="PTHR43019">
    <property type="entry name" value="SERINE ENDOPROTEASE DEGS"/>
    <property type="match status" value="1"/>
</dbReference>
<dbReference type="Pfam" id="PF00089">
    <property type="entry name" value="Trypsin"/>
    <property type="match status" value="1"/>
</dbReference>
<dbReference type="PRINTS" id="PR01774">
    <property type="entry name" value="EXFOLTOXIN"/>
</dbReference>
<dbReference type="PRINTS" id="PR00839">
    <property type="entry name" value="V8PROTEASE"/>
</dbReference>
<dbReference type="SUPFAM" id="SSF50494">
    <property type="entry name" value="Trypsin-like serine proteases"/>
    <property type="match status" value="1"/>
</dbReference>
<dbReference type="PROSITE" id="PS00672">
    <property type="entry name" value="V8_HIS"/>
    <property type="match status" value="1"/>
</dbReference>
<sequence>MNKNIIIKSIAALTILTSVTGVGTTVVEGIQQTAKAEHNVKLIKNTNVAPYNGVVSIGSGTGFIVGKNTIVTNKHVVAGMEIGAHIIAHPNGEYNNGGFYKVKKIVRYSGQEDIAILHVEDKAVHPKNRNFKDYTGILKIASEAKENERISIVGYPEPYINKFQMYESTGKVLSVKGNMIITDAFVEPGNSGSAVFNSKYEVVGVHFGGNGPGNKSTKGYGVYFSPEIKKFIADNTDK</sequence>
<gene>
    <name type="primary">splE</name>
    <name type="ordered locus">USA300HOU_1802</name>
</gene>
<protein>
    <recommendedName>
        <fullName>Serine protease SplE</fullName>
        <ecNumber>3.4.21.-</ecNumber>
    </recommendedName>
</protein>
<reference key="1">
    <citation type="journal article" date="2007" name="BMC Microbiol.">
        <title>Subtle genetic changes enhance virulence of methicillin resistant and sensitive Staphylococcus aureus.</title>
        <authorList>
            <person name="Highlander S.K."/>
            <person name="Hulten K.G."/>
            <person name="Qin X."/>
            <person name="Jiang H."/>
            <person name="Yerrapragada S."/>
            <person name="Mason E.O. Jr."/>
            <person name="Shang Y."/>
            <person name="Williams T.M."/>
            <person name="Fortunov R.M."/>
            <person name="Liu Y."/>
            <person name="Igboeli O."/>
            <person name="Petrosino J."/>
            <person name="Tirumalai M."/>
            <person name="Uzman A."/>
            <person name="Fox G.E."/>
            <person name="Cardenas A.M."/>
            <person name="Muzny D.M."/>
            <person name="Hemphill L."/>
            <person name="Ding Y."/>
            <person name="Dugan S."/>
            <person name="Blyth P.R."/>
            <person name="Buhay C.J."/>
            <person name="Dinh H.H."/>
            <person name="Hawes A.C."/>
            <person name="Holder M."/>
            <person name="Kovar C.L."/>
            <person name="Lee S.L."/>
            <person name="Liu W."/>
            <person name="Nazareth L.V."/>
            <person name="Wang Q."/>
            <person name="Zhou J."/>
            <person name="Kaplan S.L."/>
            <person name="Weinstock G.M."/>
        </authorList>
    </citation>
    <scope>NUCLEOTIDE SEQUENCE [LARGE SCALE GENOMIC DNA]</scope>
    <source>
        <strain>USA300 / TCH1516</strain>
    </source>
</reference>
<accession>A8Z4N5</accession>
<proteinExistence type="inferred from homology"/>
<evidence type="ECO:0000250" key="1"/>
<evidence type="ECO:0000255" key="2"/>
<evidence type="ECO:0000305" key="3"/>
<comment type="subcellular location">
    <subcellularLocation>
        <location evidence="1">Secreted</location>
    </subcellularLocation>
</comment>
<comment type="similarity">
    <text evidence="3">Belongs to the peptidase S1B family.</text>
</comment>
<keyword id="KW-0378">Hydrolase</keyword>
<keyword id="KW-0645">Protease</keyword>
<keyword id="KW-0964">Secreted</keyword>
<keyword id="KW-0720">Serine protease</keyword>
<keyword id="KW-0732">Signal</keyword>
<organism>
    <name type="scientific">Staphylococcus aureus (strain USA300 / TCH1516)</name>
    <dbReference type="NCBI Taxonomy" id="451516"/>
    <lineage>
        <taxon>Bacteria</taxon>
        <taxon>Bacillati</taxon>
        <taxon>Bacillota</taxon>
        <taxon>Bacilli</taxon>
        <taxon>Bacillales</taxon>
        <taxon>Staphylococcaceae</taxon>
        <taxon>Staphylococcus</taxon>
    </lineage>
</organism>